<proteinExistence type="evidence at protein level"/>
<name>ZFP42_HUMAN</name>
<feature type="chain" id="PRO_0000287289" description="Zinc finger protein 42 homolog">
    <location>
        <begin position="1"/>
        <end position="310"/>
    </location>
</feature>
<feature type="zinc finger region" description="C2H2-type 1" evidence="3">
    <location>
        <begin position="188"/>
        <end position="212"/>
    </location>
</feature>
<feature type="zinc finger region" description="C2H2-type 2" evidence="3">
    <location>
        <begin position="217"/>
        <end position="239"/>
    </location>
</feature>
<feature type="zinc finger region" description="C2H2-type 3" evidence="3">
    <location>
        <begin position="245"/>
        <end position="269"/>
    </location>
</feature>
<feature type="zinc finger region" description="C2H2-type 4" evidence="3">
    <location>
        <begin position="275"/>
        <end position="299"/>
    </location>
</feature>
<feature type="region of interest" description="Disordered" evidence="4">
    <location>
        <begin position="1"/>
        <end position="35"/>
    </location>
</feature>
<feature type="compositionally biased region" description="Basic residues" evidence="4">
    <location>
        <begin position="1"/>
        <end position="15"/>
    </location>
</feature>
<feature type="cross-link" description="Glycyl lysine isopeptide (Lys-Gly) (interchain with G-Cter in ubiquitin)" evidence="2">
    <location>
        <position position="231"/>
    </location>
</feature>
<feature type="cross-link" description="Glycyl lysine isopeptide (Lys-Gly) (interchain with G-Cter in ubiquitin)" evidence="2">
    <location>
        <position position="233"/>
    </location>
</feature>
<feature type="sequence conflict" description="In Ref. 2; AAR07993 and 3; BAB71264." evidence="9" ref="2 3">
    <original>E</original>
    <variation>G</variation>
    <location>
        <position position="88"/>
    </location>
</feature>
<protein>
    <recommendedName>
        <fullName>Zinc finger protein 42 homolog</fullName>
        <shortName>Zfp-42</shortName>
    </recommendedName>
    <alternativeName>
        <fullName>Reduced expression protein 1</fullName>
        <shortName>REX-1</shortName>
        <shortName>hREX-1</shortName>
    </alternativeName>
    <alternativeName>
        <fullName>Zinc finger protein 754</fullName>
    </alternativeName>
</protein>
<reference key="1">
    <citation type="journal article" date="2002" name="Stem Cells">
        <title>Preimplantation human embryos and embryonic stem cells show comparable expression of stage-specific embryonic antigens.</title>
        <authorList>
            <person name="Henderson J.K."/>
            <person name="Draper J.S."/>
            <person name="Baillie H.S."/>
            <person name="Fishel S."/>
            <person name="Thomson J.A."/>
            <person name="Moore H."/>
            <person name="Andrews P.W."/>
        </authorList>
    </citation>
    <scope>NUCLEOTIDE SEQUENCE [MRNA]</scope>
    <scope>TISSUE SPECIFICITY</scope>
</reference>
<reference key="2">
    <citation type="submission" date="2003-10" db="EMBL/GenBank/DDBJ databases">
        <title>A survey of transcripts in the 4q35 FSHD region.</title>
        <authorList>
            <person name="Clapp J."/>
            <person name="Hewitt J.E."/>
        </authorList>
    </citation>
    <scope>NUCLEOTIDE SEQUENCE [MRNA]</scope>
    <source>
        <tissue>Testis</tissue>
    </source>
</reference>
<reference key="3">
    <citation type="journal article" date="2004" name="Nat. Genet.">
        <title>Complete sequencing and characterization of 21,243 full-length human cDNAs.</title>
        <authorList>
            <person name="Ota T."/>
            <person name="Suzuki Y."/>
            <person name="Nishikawa T."/>
            <person name="Otsuki T."/>
            <person name="Sugiyama T."/>
            <person name="Irie R."/>
            <person name="Wakamatsu A."/>
            <person name="Hayashi K."/>
            <person name="Sato H."/>
            <person name="Nagai K."/>
            <person name="Kimura K."/>
            <person name="Makita H."/>
            <person name="Sekine M."/>
            <person name="Obayashi M."/>
            <person name="Nishi T."/>
            <person name="Shibahara T."/>
            <person name="Tanaka T."/>
            <person name="Ishii S."/>
            <person name="Yamamoto J."/>
            <person name="Saito K."/>
            <person name="Kawai Y."/>
            <person name="Isono Y."/>
            <person name="Nakamura Y."/>
            <person name="Nagahari K."/>
            <person name="Murakami K."/>
            <person name="Yasuda T."/>
            <person name="Iwayanagi T."/>
            <person name="Wagatsuma M."/>
            <person name="Shiratori A."/>
            <person name="Sudo H."/>
            <person name="Hosoiri T."/>
            <person name="Kaku Y."/>
            <person name="Kodaira H."/>
            <person name="Kondo H."/>
            <person name="Sugawara M."/>
            <person name="Takahashi M."/>
            <person name="Kanda K."/>
            <person name="Yokoi T."/>
            <person name="Furuya T."/>
            <person name="Kikkawa E."/>
            <person name="Omura Y."/>
            <person name="Abe K."/>
            <person name="Kamihara K."/>
            <person name="Katsuta N."/>
            <person name="Sato K."/>
            <person name="Tanikawa M."/>
            <person name="Yamazaki M."/>
            <person name="Ninomiya K."/>
            <person name="Ishibashi T."/>
            <person name="Yamashita H."/>
            <person name="Murakawa K."/>
            <person name="Fujimori K."/>
            <person name="Tanai H."/>
            <person name="Kimata M."/>
            <person name="Watanabe M."/>
            <person name="Hiraoka S."/>
            <person name="Chiba Y."/>
            <person name="Ishida S."/>
            <person name="Ono Y."/>
            <person name="Takiguchi S."/>
            <person name="Watanabe S."/>
            <person name="Yosida M."/>
            <person name="Hotuta T."/>
            <person name="Kusano J."/>
            <person name="Kanehori K."/>
            <person name="Takahashi-Fujii A."/>
            <person name="Hara H."/>
            <person name="Tanase T.-O."/>
            <person name="Nomura Y."/>
            <person name="Togiya S."/>
            <person name="Komai F."/>
            <person name="Hara R."/>
            <person name="Takeuchi K."/>
            <person name="Arita M."/>
            <person name="Imose N."/>
            <person name="Musashino K."/>
            <person name="Yuuki H."/>
            <person name="Oshima A."/>
            <person name="Sasaki N."/>
            <person name="Aotsuka S."/>
            <person name="Yoshikawa Y."/>
            <person name="Matsunawa H."/>
            <person name="Ichihara T."/>
            <person name="Shiohata N."/>
            <person name="Sano S."/>
            <person name="Moriya S."/>
            <person name="Momiyama H."/>
            <person name="Satoh N."/>
            <person name="Takami S."/>
            <person name="Terashima Y."/>
            <person name="Suzuki O."/>
            <person name="Nakagawa S."/>
            <person name="Senoh A."/>
            <person name="Mizoguchi H."/>
            <person name="Goto Y."/>
            <person name="Shimizu F."/>
            <person name="Wakebe H."/>
            <person name="Hishigaki H."/>
            <person name="Watanabe T."/>
            <person name="Sugiyama A."/>
            <person name="Takemoto M."/>
            <person name="Kawakami B."/>
            <person name="Yamazaki M."/>
            <person name="Watanabe K."/>
            <person name="Kumagai A."/>
            <person name="Itakura S."/>
            <person name="Fukuzumi Y."/>
            <person name="Fujimori Y."/>
            <person name="Komiyama M."/>
            <person name="Tashiro H."/>
            <person name="Tanigami A."/>
            <person name="Fujiwara T."/>
            <person name="Ono T."/>
            <person name="Yamada K."/>
            <person name="Fujii Y."/>
            <person name="Ozaki K."/>
            <person name="Hirao M."/>
            <person name="Ohmori Y."/>
            <person name="Kawabata A."/>
            <person name="Hikiji T."/>
            <person name="Kobatake N."/>
            <person name="Inagaki H."/>
            <person name="Ikema Y."/>
            <person name="Okamoto S."/>
            <person name="Okitani R."/>
            <person name="Kawakami T."/>
            <person name="Noguchi S."/>
            <person name="Itoh T."/>
            <person name="Shigeta K."/>
            <person name="Senba T."/>
            <person name="Matsumura K."/>
            <person name="Nakajima Y."/>
            <person name="Mizuno T."/>
            <person name="Morinaga M."/>
            <person name="Sasaki M."/>
            <person name="Togashi T."/>
            <person name="Oyama M."/>
            <person name="Hata H."/>
            <person name="Watanabe M."/>
            <person name="Komatsu T."/>
            <person name="Mizushima-Sugano J."/>
            <person name="Satoh T."/>
            <person name="Shirai Y."/>
            <person name="Takahashi Y."/>
            <person name="Nakagawa K."/>
            <person name="Okumura K."/>
            <person name="Nagase T."/>
            <person name="Nomura N."/>
            <person name="Kikuchi H."/>
            <person name="Masuho Y."/>
            <person name="Yamashita R."/>
            <person name="Nakai K."/>
            <person name="Yada T."/>
            <person name="Nakamura Y."/>
            <person name="Ohara O."/>
            <person name="Isogai T."/>
            <person name="Sugano S."/>
        </authorList>
    </citation>
    <scope>NUCLEOTIDE SEQUENCE [LARGE SCALE MRNA]</scope>
    <source>
        <tissue>Placenta</tissue>
    </source>
</reference>
<reference key="4">
    <citation type="journal article" date="2005" name="Nature">
        <title>Generation and annotation of the DNA sequences of human chromosomes 2 and 4.</title>
        <authorList>
            <person name="Hillier L.W."/>
            <person name="Graves T.A."/>
            <person name="Fulton R.S."/>
            <person name="Fulton L.A."/>
            <person name="Pepin K.H."/>
            <person name="Minx P."/>
            <person name="Wagner-McPherson C."/>
            <person name="Layman D."/>
            <person name="Wylie K."/>
            <person name="Sekhon M."/>
            <person name="Becker M.C."/>
            <person name="Fewell G.A."/>
            <person name="Delehaunty K.D."/>
            <person name="Miner T.L."/>
            <person name="Nash W.E."/>
            <person name="Kremitzki C."/>
            <person name="Oddy L."/>
            <person name="Du H."/>
            <person name="Sun H."/>
            <person name="Bradshaw-Cordum H."/>
            <person name="Ali J."/>
            <person name="Carter J."/>
            <person name="Cordes M."/>
            <person name="Harris A."/>
            <person name="Isak A."/>
            <person name="van Brunt A."/>
            <person name="Nguyen C."/>
            <person name="Du F."/>
            <person name="Courtney L."/>
            <person name="Kalicki J."/>
            <person name="Ozersky P."/>
            <person name="Abbott S."/>
            <person name="Armstrong J."/>
            <person name="Belter E.A."/>
            <person name="Caruso L."/>
            <person name="Cedroni M."/>
            <person name="Cotton M."/>
            <person name="Davidson T."/>
            <person name="Desai A."/>
            <person name="Elliott G."/>
            <person name="Erb T."/>
            <person name="Fronick C."/>
            <person name="Gaige T."/>
            <person name="Haakenson W."/>
            <person name="Haglund K."/>
            <person name="Holmes A."/>
            <person name="Harkins R."/>
            <person name="Kim K."/>
            <person name="Kruchowski S.S."/>
            <person name="Strong C.M."/>
            <person name="Grewal N."/>
            <person name="Goyea E."/>
            <person name="Hou S."/>
            <person name="Levy A."/>
            <person name="Martinka S."/>
            <person name="Mead K."/>
            <person name="McLellan M.D."/>
            <person name="Meyer R."/>
            <person name="Randall-Maher J."/>
            <person name="Tomlinson C."/>
            <person name="Dauphin-Kohlberg S."/>
            <person name="Kozlowicz-Reilly A."/>
            <person name="Shah N."/>
            <person name="Swearengen-Shahid S."/>
            <person name="Snider J."/>
            <person name="Strong J.T."/>
            <person name="Thompson J."/>
            <person name="Yoakum M."/>
            <person name="Leonard S."/>
            <person name="Pearman C."/>
            <person name="Trani L."/>
            <person name="Radionenko M."/>
            <person name="Waligorski J.E."/>
            <person name="Wang C."/>
            <person name="Rock S.M."/>
            <person name="Tin-Wollam A.-M."/>
            <person name="Maupin R."/>
            <person name="Latreille P."/>
            <person name="Wendl M.C."/>
            <person name="Yang S.-P."/>
            <person name="Pohl C."/>
            <person name="Wallis J.W."/>
            <person name="Spieth J."/>
            <person name="Bieri T.A."/>
            <person name="Berkowicz N."/>
            <person name="Nelson J.O."/>
            <person name="Osborne J."/>
            <person name="Ding L."/>
            <person name="Meyer R."/>
            <person name="Sabo A."/>
            <person name="Shotland Y."/>
            <person name="Sinha P."/>
            <person name="Wohldmann P.E."/>
            <person name="Cook L.L."/>
            <person name="Hickenbotham M.T."/>
            <person name="Eldred J."/>
            <person name="Williams D."/>
            <person name="Jones T.A."/>
            <person name="She X."/>
            <person name="Ciccarelli F.D."/>
            <person name="Izaurralde E."/>
            <person name="Taylor J."/>
            <person name="Schmutz J."/>
            <person name="Myers R.M."/>
            <person name="Cox D.R."/>
            <person name="Huang X."/>
            <person name="McPherson J.D."/>
            <person name="Mardis E.R."/>
            <person name="Clifton S.W."/>
            <person name="Warren W.C."/>
            <person name="Chinwalla A.T."/>
            <person name="Eddy S.R."/>
            <person name="Marra M.A."/>
            <person name="Ovcharenko I."/>
            <person name="Furey T.S."/>
            <person name="Miller W."/>
            <person name="Eichler E.E."/>
            <person name="Bork P."/>
            <person name="Suyama M."/>
            <person name="Torrents D."/>
            <person name="Waterston R.H."/>
            <person name="Wilson R.K."/>
        </authorList>
    </citation>
    <scope>NUCLEOTIDE SEQUENCE [LARGE SCALE GENOMIC DNA]</scope>
</reference>
<reference key="5">
    <citation type="submission" date="2005-09" db="EMBL/GenBank/DDBJ databases">
        <authorList>
            <person name="Mural R.J."/>
            <person name="Istrail S."/>
            <person name="Sutton G.G."/>
            <person name="Florea L."/>
            <person name="Halpern A.L."/>
            <person name="Mobarry C.M."/>
            <person name="Lippert R."/>
            <person name="Walenz B."/>
            <person name="Shatkay H."/>
            <person name="Dew I."/>
            <person name="Miller J.R."/>
            <person name="Flanigan M.J."/>
            <person name="Edwards N.J."/>
            <person name="Bolanos R."/>
            <person name="Fasulo D."/>
            <person name="Halldorsson B.V."/>
            <person name="Hannenhalli S."/>
            <person name="Turner R."/>
            <person name="Yooseph S."/>
            <person name="Lu F."/>
            <person name="Nusskern D.R."/>
            <person name="Shue B.C."/>
            <person name="Zheng X.H."/>
            <person name="Zhong F."/>
            <person name="Delcher A.L."/>
            <person name="Huson D.H."/>
            <person name="Kravitz S.A."/>
            <person name="Mouchard L."/>
            <person name="Reinert K."/>
            <person name="Remington K.A."/>
            <person name="Clark A.G."/>
            <person name="Waterman M.S."/>
            <person name="Eichler E.E."/>
            <person name="Adams M.D."/>
            <person name="Hunkapiller M.W."/>
            <person name="Myers E.W."/>
            <person name="Venter J.C."/>
        </authorList>
    </citation>
    <scope>NUCLEOTIDE SEQUENCE [LARGE SCALE GENOMIC DNA]</scope>
</reference>
<reference key="6">
    <citation type="journal article" date="2006" name="Cancer Res.">
        <title>Down-regulation of stem cell genes, including those in a 200-kb gene cluster at 12p13.31, is associated with in vivo differentiation of human male germ cell tumors.</title>
        <authorList>
            <person name="Korkola J.E."/>
            <person name="Houldsworth J."/>
            <person name="Chadalavada R.S."/>
            <person name="Olshen A.B."/>
            <person name="Dobrzynski D."/>
            <person name="Reuter V.E."/>
            <person name="Bosl G.J."/>
            <person name="Chaganti R.S."/>
        </authorList>
    </citation>
    <scope>TISSUE SPECIFICITY</scope>
</reference>
<reference key="7">
    <citation type="journal article" date="2006" name="Carcinogenesis">
        <title>Decreased expression of the human stem cell marker, Rex-1 (zfp-42), in renal cell carcinoma.</title>
        <authorList>
            <person name="Raman J.D."/>
            <person name="Mongan N.P."/>
            <person name="Liu L."/>
            <person name="Tickoo S.K."/>
            <person name="Nanus D.M."/>
            <person name="Scherr D.S."/>
            <person name="Gudas L.J."/>
        </authorList>
    </citation>
    <scope>INDUCTION</scope>
    <scope>TISSUE SPECIFICITY</scope>
</reference>
<reference key="8">
    <citation type="journal article" date="2006" name="Mol. Carcinog.">
        <title>The putative human stem cell marker, Rex-1 (Zfp42): structural classification and expression in normal human epithelial and carcinoma cell cultures.</title>
        <authorList>
            <person name="Mongan N.P."/>
            <person name="Martin K.M."/>
            <person name="Gudas L.J."/>
        </authorList>
    </citation>
    <scope>TISSUE SPECIFICITY</scope>
</reference>
<gene>
    <name type="primary">ZFP42</name>
    <name type="synonym">REX1</name>
    <name type="synonym">ZNF754</name>
</gene>
<keyword id="KW-0010">Activator</keyword>
<keyword id="KW-0238">DNA-binding</keyword>
<keyword id="KW-1017">Isopeptide bond</keyword>
<keyword id="KW-0479">Metal-binding</keyword>
<keyword id="KW-0539">Nucleus</keyword>
<keyword id="KW-1267">Proteomics identification</keyword>
<keyword id="KW-1185">Reference proteome</keyword>
<keyword id="KW-0677">Repeat</keyword>
<keyword id="KW-0804">Transcription</keyword>
<keyword id="KW-0805">Transcription regulation</keyword>
<keyword id="KW-0832">Ubl conjugation</keyword>
<keyword id="KW-0862">Zinc</keyword>
<keyword id="KW-0863">Zinc-finger</keyword>
<evidence type="ECO:0000250" key="1"/>
<evidence type="ECO:0000250" key="2">
    <source>
        <dbReference type="UniProtKB" id="P22227"/>
    </source>
</evidence>
<evidence type="ECO:0000255" key="3">
    <source>
        <dbReference type="PROSITE-ProRule" id="PRU00042"/>
    </source>
</evidence>
<evidence type="ECO:0000256" key="4">
    <source>
        <dbReference type="SAM" id="MobiDB-lite"/>
    </source>
</evidence>
<evidence type="ECO:0000269" key="5">
    <source>
    </source>
</evidence>
<evidence type="ECO:0000269" key="6">
    <source>
    </source>
</evidence>
<evidence type="ECO:0000269" key="7">
    <source>
    </source>
</evidence>
<evidence type="ECO:0000269" key="8">
    <source>
    </source>
</evidence>
<evidence type="ECO:0000305" key="9"/>
<dbReference type="EMBL" id="AF450454">
    <property type="protein sequence ID" value="AAL47167.1"/>
    <property type="molecule type" value="mRNA"/>
</dbReference>
<dbReference type="EMBL" id="AY429593">
    <property type="protein sequence ID" value="AAR07993.1"/>
    <property type="molecule type" value="mRNA"/>
</dbReference>
<dbReference type="EMBL" id="AK056719">
    <property type="protein sequence ID" value="BAB71264.1"/>
    <property type="molecule type" value="mRNA"/>
</dbReference>
<dbReference type="EMBL" id="AC108073">
    <property type="status" value="NOT_ANNOTATED_CDS"/>
    <property type="molecule type" value="Genomic_DNA"/>
</dbReference>
<dbReference type="EMBL" id="CH471056">
    <property type="protein sequence ID" value="EAX04610.1"/>
    <property type="molecule type" value="Genomic_DNA"/>
</dbReference>
<dbReference type="EMBL" id="CH471056">
    <property type="protein sequence ID" value="EAX04611.1"/>
    <property type="molecule type" value="Genomic_DNA"/>
</dbReference>
<dbReference type="EMBL" id="CH471056">
    <property type="protein sequence ID" value="EAX04612.1"/>
    <property type="molecule type" value="Genomic_DNA"/>
</dbReference>
<dbReference type="CCDS" id="CCDS3849.1"/>
<dbReference type="RefSeq" id="NP_001291287.1">
    <property type="nucleotide sequence ID" value="NM_001304358.2"/>
</dbReference>
<dbReference type="RefSeq" id="NP_777560.2">
    <property type="nucleotide sequence ID" value="NM_174900.5"/>
</dbReference>
<dbReference type="RefSeq" id="XP_011529906.1">
    <property type="nucleotide sequence ID" value="XM_011531604.3"/>
</dbReference>
<dbReference type="RefSeq" id="XP_011529907.1">
    <property type="nucleotide sequence ID" value="XM_011531605.2"/>
</dbReference>
<dbReference type="RefSeq" id="XP_011529908.1">
    <property type="nucleotide sequence ID" value="XM_011531606.2"/>
</dbReference>
<dbReference type="RefSeq" id="XP_011529909.1">
    <property type="nucleotide sequence ID" value="XM_011531607.2"/>
</dbReference>
<dbReference type="RefSeq" id="XP_047305558.1">
    <property type="nucleotide sequence ID" value="XM_047449602.1"/>
</dbReference>
<dbReference type="RefSeq" id="XP_047305559.1">
    <property type="nucleotide sequence ID" value="XM_047449603.1"/>
</dbReference>
<dbReference type="RefSeq" id="XP_054204881.1">
    <property type="nucleotide sequence ID" value="XM_054348906.1"/>
</dbReference>
<dbReference type="RefSeq" id="XP_054204882.1">
    <property type="nucleotide sequence ID" value="XM_054348907.1"/>
</dbReference>
<dbReference type="RefSeq" id="XP_054204883.1">
    <property type="nucleotide sequence ID" value="XM_054348908.1"/>
</dbReference>
<dbReference type="RefSeq" id="XP_054204884.1">
    <property type="nucleotide sequence ID" value="XM_054348909.1"/>
</dbReference>
<dbReference type="RefSeq" id="XP_054204885.1">
    <property type="nucleotide sequence ID" value="XM_054348910.1"/>
</dbReference>
<dbReference type="RefSeq" id="XP_054204886.1">
    <property type="nucleotide sequence ID" value="XM_054348911.1"/>
</dbReference>
<dbReference type="RefSeq" id="XP_054204887.1">
    <property type="nucleotide sequence ID" value="XM_054348912.1"/>
</dbReference>
<dbReference type="SMR" id="Q96MM3"/>
<dbReference type="BioGRID" id="126327">
    <property type="interactions" value="20"/>
</dbReference>
<dbReference type="FunCoup" id="Q96MM3">
    <property type="interactions" value="17"/>
</dbReference>
<dbReference type="IntAct" id="Q96MM3">
    <property type="interactions" value="7"/>
</dbReference>
<dbReference type="STRING" id="9606.ENSP00000317686"/>
<dbReference type="iPTMnet" id="Q96MM3"/>
<dbReference type="PhosphoSitePlus" id="Q96MM3"/>
<dbReference type="BioMuta" id="ZFP42"/>
<dbReference type="DMDM" id="296453032"/>
<dbReference type="jPOST" id="Q96MM3"/>
<dbReference type="MassIVE" id="Q96MM3"/>
<dbReference type="PaxDb" id="9606-ENSP00000317686"/>
<dbReference type="PeptideAtlas" id="Q96MM3"/>
<dbReference type="ProteomicsDB" id="77373"/>
<dbReference type="Antibodypedia" id="17568">
    <property type="antibodies" value="375 antibodies from 31 providers"/>
</dbReference>
<dbReference type="DNASU" id="132625"/>
<dbReference type="Ensembl" id="ENST00000326866.5">
    <property type="protein sequence ID" value="ENSP00000317686.4"/>
    <property type="gene ID" value="ENSG00000179059.10"/>
</dbReference>
<dbReference type="Ensembl" id="ENST00000509524.5">
    <property type="protein sequence ID" value="ENSP00000424662.1"/>
    <property type="gene ID" value="ENSG00000179059.10"/>
</dbReference>
<dbReference type="Ensembl" id="ENST00000618147.1">
    <property type="protein sequence ID" value="ENSP00000483363.1"/>
    <property type="gene ID" value="ENSG00000179059.10"/>
</dbReference>
<dbReference type="GeneID" id="132625"/>
<dbReference type="KEGG" id="hsa:132625"/>
<dbReference type="MANE-Select" id="ENST00000326866.5">
    <property type="protein sequence ID" value="ENSP00000317686.4"/>
    <property type="RefSeq nucleotide sequence ID" value="NM_174900.5"/>
    <property type="RefSeq protein sequence ID" value="NP_777560.2"/>
</dbReference>
<dbReference type="UCSC" id="uc003izh.2">
    <property type="organism name" value="human"/>
</dbReference>
<dbReference type="AGR" id="HGNC:30949"/>
<dbReference type="CTD" id="132625"/>
<dbReference type="DisGeNET" id="132625"/>
<dbReference type="GeneCards" id="ZFP42"/>
<dbReference type="HGNC" id="HGNC:30949">
    <property type="gene designation" value="ZFP42"/>
</dbReference>
<dbReference type="HPA" id="ENSG00000179059">
    <property type="expression patterns" value="Tissue enhanced (testis)"/>
</dbReference>
<dbReference type="MIM" id="614572">
    <property type="type" value="gene"/>
</dbReference>
<dbReference type="neXtProt" id="NX_Q96MM3"/>
<dbReference type="OpenTargets" id="ENSG00000179059"/>
<dbReference type="PharmGKB" id="PA142670530"/>
<dbReference type="VEuPathDB" id="HostDB:ENSG00000179059"/>
<dbReference type="eggNOG" id="KOG1721">
    <property type="taxonomic scope" value="Eukaryota"/>
</dbReference>
<dbReference type="GeneTree" id="ENSGT00940000163257"/>
<dbReference type="HOGENOM" id="CLU_085915_0_0_1"/>
<dbReference type="InParanoid" id="Q96MM3"/>
<dbReference type="OMA" id="PDCYIEC"/>
<dbReference type="OrthoDB" id="10264072at2759"/>
<dbReference type="PAN-GO" id="Q96MM3">
    <property type="GO annotations" value="5 GO annotations based on evolutionary models"/>
</dbReference>
<dbReference type="PhylomeDB" id="Q96MM3"/>
<dbReference type="TreeFam" id="TF106493"/>
<dbReference type="PathwayCommons" id="Q96MM3"/>
<dbReference type="SignaLink" id="Q96MM3"/>
<dbReference type="SIGNOR" id="Q96MM3"/>
<dbReference type="BioGRID-ORCS" id="132625">
    <property type="hits" value="16 hits in 1172 CRISPR screens"/>
</dbReference>
<dbReference type="GeneWiki" id="Rex1"/>
<dbReference type="GenomeRNAi" id="132625"/>
<dbReference type="Pharos" id="Q96MM3">
    <property type="development level" value="Tbio"/>
</dbReference>
<dbReference type="PRO" id="PR:Q96MM3"/>
<dbReference type="Proteomes" id="UP000005640">
    <property type="component" value="Chromosome 4"/>
</dbReference>
<dbReference type="RNAct" id="Q96MM3">
    <property type="molecule type" value="protein"/>
</dbReference>
<dbReference type="Bgee" id="ENSG00000179059">
    <property type="expression patterns" value="Expressed in buccal mucosa cell and 32 other cell types or tissues"/>
</dbReference>
<dbReference type="GO" id="GO:0000785">
    <property type="term" value="C:chromatin"/>
    <property type="evidence" value="ECO:0000318"/>
    <property type="project" value="GO_Central"/>
</dbReference>
<dbReference type="GO" id="GO:0005737">
    <property type="term" value="C:cytoplasm"/>
    <property type="evidence" value="ECO:0000314"/>
    <property type="project" value="UniProtKB"/>
</dbReference>
<dbReference type="GO" id="GO:0031519">
    <property type="term" value="C:PcG protein complex"/>
    <property type="evidence" value="ECO:0000318"/>
    <property type="project" value="GO_Central"/>
</dbReference>
<dbReference type="GO" id="GO:0005667">
    <property type="term" value="C:transcription regulator complex"/>
    <property type="evidence" value="ECO:0000318"/>
    <property type="project" value="GO_Central"/>
</dbReference>
<dbReference type="GO" id="GO:0003700">
    <property type="term" value="F:DNA-binding transcription factor activity"/>
    <property type="evidence" value="ECO:0000303"/>
    <property type="project" value="UniProtKB"/>
</dbReference>
<dbReference type="GO" id="GO:0000981">
    <property type="term" value="F:DNA-binding transcription factor activity, RNA polymerase II-specific"/>
    <property type="evidence" value="ECO:0000318"/>
    <property type="project" value="GO_Central"/>
</dbReference>
<dbReference type="GO" id="GO:0000978">
    <property type="term" value="F:RNA polymerase II cis-regulatory region sequence-specific DNA binding"/>
    <property type="evidence" value="ECO:0000318"/>
    <property type="project" value="GO_Central"/>
</dbReference>
<dbReference type="GO" id="GO:1990837">
    <property type="term" value="F:sequence-specific double-stranded DNA binding"/>
    <property type="evidence" value="ECO:0000314"/>
    <property type="project" value="ARUK-UCL"/>
</dbReference>
<dbReference type="GO" id="GO:0008270">
    <property type="term" value="F:zinc ion binding"/>
    <property type="evidence" value="ECO:0007669"/>
    <property type="project" value="UniProtKB-KW"/>
</dbReference>
<dbReference type="GO" id="GO:0008585">
    <property type="term" value="P:female gonad development"/>
    <property type="evidence" value="ECO:0000270"/>
    <property type="project" value="UniProtKB"/>
</dbReference>
<dbReference type="GO" id="GO:0008584">
    <property type="term" value="P:male gonad development"/>
    <property type="evidence" value="ECO:0000270"/>
    <property type="project" value="UniProtKB"/>
</dbReference>
<dbReference type="GO" id="GO:0051321">
    <property type="term" value="P:meiotic cell cycle"/>
    <property type="evidence" value="ECO:0000303"/>
    <property type="project" value="UniProtKB"/>
</dbReference>
<dbReference type="GO" id="GO:0006357">
    <property type="term" value="P:regulation of transcription by RNA polymerase II"/>
    <property type="evidence" value="ECO:0000318"/>
    <property type="project" value="GO_Central"/>
</dbReference>
<dbReference type="FunFam" id="3.30.160.60:FF:000104">
    <property type="entry name" value="Transcriptional repressor protein YY1"/>
    <property type="match status" value="1"/>
</dbReference>
<dbReference type="FunFam" id="3.30.160.60:FF:000109">
    <property type="entry name" value="Transcriptional repressor protein YY1"/>
    <property type="match status" value="1"/>
</dbReference>
<dbReference type="FunFam" id="3.30.160.60:FF:000163">
    <property type="entry name" value="transcriptional repressor protein YY1"/>
    <property type="match status" value="1"/>
</dbReference>
<dbReference type="Gene3D" id="3.30.160.60">
    <property type="entry name" value="Classic Zinc Finger"/>
    <property type="match status" value="4"/>
</dbReference>
<dbReference type="InterPro" id="IPR036236">
    <property type="entry name" value="Znf_C2H2_sf"/>
</dbReference>
<dbReference type="InterPro" id="IPR013087">
    <property type="entry name" value="Znf_C2H2_type"/>
</dbReference>
<dbReference type="PANTHER" id="PTHR14003">
    <property type="entry name" value="TRANSCRIPTIONAL REPRESSOR PROTEIN YY"/>
    <property type="match status" value="1"/>
</dbReference>
<dbReference type="PANTHER" id="PTHR14003:SF8">
    <property type="entry name" value="ZINC FINGER PROTEIN 42 HOMOLOG"/>
    <property type="match status" value="1"/>
</dbReference>
<dbReference type="Pfam" id="PF00096">
    <property type="entry name" value="zf-C2H2"/>
    <property type="match status" value="3"/>
</dbReference>
<dbReference type="SMART" id="SM00355">
    <property type="entry name" value="ZnF_C2H2"/>
    <property type="match status" value="4"/>
</dbReference>
<dbReference type="SUPFAM" id="SSF57667">
    <property type="entry name" value="beta-beta-alpha zinc fingers"/>
    <property type="match status" value="3"/>
</dbReference>
<dbReference type="PROSITE" id="PS00028">
    <property type="entry name" value="ZINC_FINGER_C2H2_1"/>
    <property type="match status" value="4"/>
</dbReference>
<dbReference type="PROSITE" id="PS50157">
    <property type="entry name" value="ZINC_FINGER_C2H2_2"/>
    <property type="match status" value="3"/>
</dbReference>
<sequence>MSQQLKKRAKTRHQKGLGGRAPSGAKPRQGKSSQDLQAEIEPVSAVWALCDGYVCYEPGPQALGGDDFSDCYIECVIRGEFSQPILEEDSLFESLEYLKKGSEQQLSQKVFEASSLECSLEYMKKGVKKELPQKIVGENSLEYSEYMTGKKLPPGGIPGIDLSDPKQLAEFARKKPPINKEYDSLSAIACPQSGCTRKLRNRAALRKHLLIHGPRDHVCAECGKAFVESSKLKRHFLVHTGEKPFRCTFEGCGKRFSLDFNLRTHVRIHTGEKRFVCPFQGCNRRFIQSNNLKAHILTHANTNKNEQEGK</sequence>
<comment type="function">
    <text evidence="1">Involved in the reprogramming of X-chromosome inactivation during the acquisition of pluripotency. Required for efficient elongation of TSIX, a non-coding RNA antisense to XIST. Binds DXPas34 enhancer within the TSIX promoter. Involved in ES cell self-renewal (By similarity).</text>
</comment>
<comment type="interaction">
    <interactant intactId="EBI-12151755">
        <id>Q96MM3</id>
    </interactant>
    <interactant intactId="EBI-12179869">
        <id>P50458</id>
        <label>LHX2</label>
    </interactant>
    <organismsDiffer>false</organismsDiffer>
    <experiments>3</experiments>
</comment>
<comment type="interaction">
    <interactant intactId="EBI-12151755">
        <id>Q96MM3</id>
    </interactant>
    <interactant intactId="EBI-16439278">
        <id>Q6FHY5</id>
        <label>MEOX2</label>
    </interactant>
    <organismsDiffer>false</organismsDiffer>
    <experiments>3</experiments>
</comment>
<comment type="interaction">
    <interactant intactId="EBI-12151755">
        <id>Q96MM3</id>
    </interactant>
    <interactant intactId="EBI-348567">
        <id>O75928-2</id>
        <label>PIAS2</label>
    </interactant>
    <organismsDiffer>false</organismsDiffer>
    <experiments>3</experiments>
</comment>
<comment type="interaction">
    <interactant intactId="EBI-12151755">
        <id>Q96MM3</id>
    </interactant>
    <interactant intactId="EBI-2340927">
        <id>P78317</id>
        <label>RNF4</label>
    </interactant>
    <organismsDiffer>false</organismsDiffer>
    <experiments>3</experiments>
</comment>
<comment type="interaction">
    <interactant intactId="EBI-12151755">
        <id>Q96MM3</id>
    </interactant>
    <interactant intactId="EBI-80140">
        <id>P63165</id>
        <label>SUMO1</label>
    </interactant>
    <organismsDiffer>false</organismsDiffer>
    <experiments>3</experiments>
</comment>
<comment type="subcellular location">
    <subcellularLocation>
        <location evidence="1">Nucleus</location>
    </subcellularLocation>
</comment>
<comment type="tissue specificity">
    <text evidence="5 6 7 8">Expressed in kidney, epidermal keratinocytes, prostate epithelial cells, bronchial and small airway lung epithelial cells (at protein level). Expressed in malignant kidney and several carcinoma cell lines (at protein level). Expressed in embryonic stem cells, kidney, epidermal keratinocytes, prostate epithelial cells, bronchial and small airway lung epithelial cells. Expressed in embryonal carcinomas, seminomas, malignant kidney and several carcinoma cell lines.</text>
</comment>
<comment type="induction">
    <text evidence="6">Down-regulated upon retinoic acid addition to F9 stem cells.</text>
</comment>
<comment type="PTM">
    <text evidence="1">Polyubiquitinated by RNF12, leading to proteasomal degradation.</text>
</comment>
<comment type="similarity">
    <text evidence="9">Belongs to the krueppel C2H2-type zinc-finger protein family.</text>
</comment>
<accession>Q96MM3</accession>
<accession>D3DP65</accession>
<accession>Q8WXE2</accession>
<organism>
    <name type="scientific">Homo sapiens</name>
    <name type="common">Human</name>
    <dbReference type="NCBI Taxonomy" id="9606"/>
    <lineage>
        <taxon>Eukaryota</taxon>
        <taxon>Metazoa</taxon>
        <taxon>Chordata</taxon>
        <taxon>Craniata</taxon>
        <taxon>Vertebrata</taxon>
        <taxon>Euteleostomi</taxon>
        <taxon>Mammalia</taxon>
        <taxon>Eutheria</taxon>
        <taxon>Euarchontoglires</taxon>
        <taxon>Primates</taxon>
        <taxon>Haplorrhini</taxon>
        <taxon>Catarrhini</taxon>
        <taxon>Hominidae</taxon>
        <taxon>Homo</taxon>
    </lineage>
</organism>